<feature type="chain" id="PRO_0000261810" description="Large ribosomal subunit protein uL13">
    <location>
        <begin position="1"/>
        <end position="151"/>
    </location>
</feature>
<sequence>MNKTYLPSQGAIERNWYVVDAADQRLGRLATEIARVLRGKHKPTYTPHMDTGDFVIVINADKVTVTGRKASQKLYRRHSGRPGGMKVETFAHLQQRLPERIIEQAVKGMLPKNALGRQLFTKLKVYRGAEHPHQAQQPEVLSIQTFAGDDN</sequence>
<gene>
    <name evidence="1" type="primary">rplM</name>
    <name evidence="1" type="synonym">rpl13</name>
    <name type="ordered locus">Synpcc7942_2206</name>
</gene>
<evidence type="ECO:0000255" key="1">
    <source>
        <dbReference type="HAMAP-Rule" id="MF_01366"/>
    </source>
</evidence>
<evidence type="ECO:0000305" key="2"/>
<accession>Q31L33</accession>
<dbReference type="EMBL" id="CP000100">
    <property type="protein sequence ID" value="ABB58236.1"/>
    <property type="molecule type" value="Genomic_DNA"/>
</dbReference>
<dbReference type="RefSeq" id="WP_011244201.1">
    <property type="nucleotide sequence ID" value="NZ_JACJTX010000001.1"/>
</dbReference>
<dbReference type="SMR" id="Q31L33"/>
<dbReference type="STRING" id="1140.Synpcc7942_2206"/>
<dbReference type="PaxDb" id="1140-Synpcc7942_2206"/>
<dbReference type="GeneID" id="72431089"/>
<dbReference type="KEGG" id="syf:Synpcc7942_2206"/>
<dbReference type="eggNOG" id="COG0102">
    <property type="taxonomic scope" value="Bacteria"/>
</dbReference>
<dbReference type="HOGENOM" id="CLU_082184_2_2_3"/>
<dbReference type="OrthoDB" id="9801330at2"/>
<dbReference type="BioCyc" id="SYNEL:SYNPCC7942_2206-MONOMER"/>
<dbReference type="Proteomes" id="UP000889800">
    <property type="component" value="Chromosome"/>
</dbReference>
<dbReference type="GO" id="GO:0022625">
    <property type="term" value="C:cytosolic large ribosomal subunit"/>
    <property type="evidence" value="ECO:0007669"/>
    <property type="project" value="TreeGrafter"/>
</dbReference>
<dbReference type="GO" id="GO:0003729">
    <property type="term" value="F:mRNA binding"/>
    <property type="evidence" value="ECO:0007669"/>
    <property type="project" value="TreeGrafter"/>
</dbReference>
<dbReference type="GO" id="GO:0003735">
    <property type="term" value="F:structural constituent of ribosome"/>
    <property type="evidence" value="ECO:0007669"/>
    <property type="project" value="InterPro"/>
</dbReference>
<dbReference type="GO" id="GO:0017148">
    <property type="term" value="P:negative regulation of translation"/>
    <property type="evidence" value="ECO:0007669"/>
    <property type="project" value="TreeGrafter"/>
</dbReference>
<dbReference type="GO" id="GO:0006412">
    <property type="term" value="P:translation"/>
    <property type="evidence" value="ECO:0007669"/>
    <property type="project" value="UniProtKB-UniRule"/>
</dbReference>
<dbReference type="CDD" id="cd00392">
    <property type="entry name" value="Ribosomal_L13"/>
    <property type="match status" value="1"/>
</dbReference>
<dbReference type="FunFam" id="3.90.1180.10:FF:000001">
    <property type="entry name" value="50S ribosomal protein L13"/>
    <property type="match status" value="1"/>
</dbReference>
<dbReference type="Gene3D" id="3.90.1180.10">
    <property type="entry name" value="Ribosomal protein L13"/>
    <property type="match status" value="1"/>
</dbReference>
<dbReference type="HAMAP" id="MF_01366">
    <property type="entry name" value="Ribosomal_uL13"/>
    <property type="match status" value="1"/>
</dbReference>
<dbReference type="InterPro" id="IPR005822">
    <property type="entry name" value="Ribosomal_uL13"/>
</dbReference>
<dbReference type="InterPro" id="IPR005823">
    <property type="entry name" value="Ribosomal_uL13_bac-type"/>
</dbReference>
<dbReference type="InterPro" id="IPR023563">
    <property type="entry name" value="Ribosomal_uL13_CS"/>
</dbReference>
<dbReference type="InterPro" id="IPR036899">
    <property type="entry name" value="Ribosomal_uL13_sf"/>
</dbReference>
<dbReference type="NCBIfam" id="TIGR01066">
    <property type="entry name" value="rplM_bact"/>
    <property type="match status" value="1"/>
</dbReference>
<dbReference type="PANTHER" id="PTHR11545:SF2">
    <property type="entry name" value="LARGE RIBOSOMAL SUBUNIT PROTEIN UL13M"/>
    <property type="match status" value="1"/>
</dbReference>
<dbReference type="PANTHER" id="PTHR11545">
    <property type="entry name" value="RIBOSOMAL PROTEIN L13"/>
    <property type="match status" value="1"/>
</dbReference>
<dbReference type="Pfam" id="PF00572">
    <property type="entry name" value="Ribosomal_L13"/>
    <property type="match status" value="1"/>
</dbReference>
<dbReference type="PIRSF" id="PIRSF002181">
    <property type="entry name" value="Ribosomal_L13"/>
    <property type="match status" value="1"/>
</dbReference>
<dbReference type="SUPFAM" id="SSF52161">
    <property type="entry name" value="Ribosomal protein L13"/>
    <property type="match status" value="1"/>
</dbReference>
<dbReference type="PROSITE" id="PS00783">
    <property type="entry name" value="RIBOSOMAL_L13"/>
    <property type="match status" value="1"/>
</dbReference>
<proteinExistence type="inferred from homology"/>
<reference key="1">
    <citation type="submission" date="2005-08" db="EMBL/GenBank/DDBJ databases">
        <title>Complete sequence of chromosome 1 of Synechococcus elongatus PCC 7942.</title>
        <authorList>
            <consortium name="US DOE Joint Genome Institute"/>
            <person name="Copeland A."/>
            <person name="Lucas S."/>
            <person name="Lapidus A."/>
            <person name="Barry K."/>
            <person name="Detter J.C."/>
            <person name="Glavina T."/>
            <person name="Hammon N."/>
            <person name="Israni S."/>
            <person name="Pitluck S."/>
            <person name="Schmutz J."/>
            <person name="Larimer F."/>
            <person name="Land M."/>
            <person name="Kyrpides N."/>
            <person name="Lykidis A."/>
            <person name="Golden S."/>
            <person name="Richardson P."/>
        </authorList>
    </citation>
    <scope>NUCLEOTIDE SEQUENCE [LARGE SCALE GENOMIC DNA]</scope>
    <source>
        <strain>ATCC 33912 / PCC 7942 / FACHB-805</strain>
    </source>
</reference>
<keyword id="KW-1185">Reference proteome</keyword>
<keyword id="KW-0687">Ribonucleoprotein</keyword>
<keyword id="KW-0689">Ribosomal protein</keyword>
<protein>
    <recommendedName>
        <fullName evidence="1">Large ribosomal subunit protein uL13</fullName>
    </recommendedName>
    <alternativeName>
        <fullName evidence="2">50S ribosomal protein L13</fullName>
    </alternativeName>
</protein>
<comment type="function">
    <text evidence="1">This protein is one of the early assembly proteins of the 50S ribosomal subunit, although it is not seen to bind rRNA by itself. It is important during the early stages of 50S assembly.</text>
</comment>
<comment type="subunit">
    <text evidence="1">Part of the 50S ribosomal subunit.</text>
</comment>
<comment type="similarity">
    <text evidence="1">Belongs to the universal ribosomal protein uL13 family.</text>
</comment>
<name>RL13_SYNE7</name>
<organism>
    <name type="scientific">Synechococcus elongatus (strain ATCC 33912 / PCC 7942 / FACHB-805)</name>
    <name type="common">Anacystis nidulans R2</name>
    <dbReference type="NCBI Taxonomy" id="1140"/>
    <lineage>
        <taxon>Bacteria</taxon>
        <taxon>Bacillati</taxon>
        <taxon>Cyanobacteriota</taxon>
        <taxon>Cyanophyceae</taxon>
        <taxon>Synechococcales</taxon>
        <taxon>Synechococcaceae</taxon>
        <taxon>Synechococcus</taxon>
    </lineage>
</organism>